<name>GUOP_HALLT</name>
<organism>
    <name type="scientific">Halorubrum lacusprofundi (strain ATCC 49239 / DSM 5036 / JCM 8891 / ACAM 34)</name>
    <dbReference type="NCBI Taxonomy" id="416348"/>
    <lineage>
        <taxon>Archaea</taxon>
        <taxon>Methanobacteriati</taxon>
        <taxon>Methanobacteriota</taxon>
        <taxon>Stenosarchaea group</taxon>
        <taxon>Halobacteria</taxon>
        <taxon>Halobacteriales</taxon>
        <taxon>Haloferacaceae</taxon>
        <taxon>Halorubrum</taxon>
    </lineage>
</organism>
<gene>
    <name evidence="4" type="ordered locus">Hlac_2318</name>
</gene>
<dbReference type="EC" id="2.4.2.1" evidence="1"/>
<dbReference type="EMBL" id="CP001365">
    <property type="protein sequence ID" value="ACM57894.1"/>
    <property type="molecule type" value="Genomic_DNA"/>
</dbReference>
<dbReference type="RefSeq" id="WP_015911015.1">
    <property type="nucleotide sequence ID" value="NC_012029.1"/>
</dbReference>
<dbReference type="SMR" id="B9LS20"/>
<dbReference type="STRING" id="416348.Hlac_2318"/>
<dbReference type="GeneID" id="7401935"/>
<dbReference type="KEGG" id="hla:Hlac_2318"/>
<dbReference type="eggNOG" id="arCOG01324">
    <property type="taxonomic scope" value="Archaea"/>
</dbReference>
<dbReference type="HOGENOM" id="CLU_068457_0_0_2"/>
<dbReference type="BioCyc" id="MetaCyc:MONOMER-124394"/>
<dbReference type="Proteomes" id="UP000000740">
    <property type="component" value="Chromosome 1"/>
</dbReference>
<dbReference type="GO" id="GO:0005829">
    <property type="term" value="C:cytosol"/>
    <property type="evidence" value="ECO:0007669"/>
    <property type="project" value="TreeGrafter"/>
</dbReference>
<dbReference type="GO" id="GO:0047975">
    <property type="term" value="F:guanosine phosphorylase activity"/>
    <property type="evidence" value="ECO:0007669"/>
    <property type="project" value="RHEA"/>
</dbReference>
<dbReference type="GO" id="GO:0017061">
    <property type="term" value="F:S-methyl-5-thioadenosine phosphorylase activity"/>
    <property type="evidence" value="ECO:0007669"/>
    <property type="project" value="UniProtKB-EC"/>
</dbReference>
<dbReference type="GO" id="GO:0009164">
    <property type="term" value="P:nucleoside catabolic process"/>
    <property type="evidence" value="ECO:0007669"/>
    <property type="project" value="UniProtKB-ARBA"/>
</dbReference>
<dbReference type="CDD" id="cd17767">
    <property type="entry name" value="UP_EcUdp-like"/>
    <property type="match status" value="1"/>
</dbReference>
<dbReference type="Gene3D" id="3.40.50.1580">
    <property type="entry name" value="Nucleoside phosphorylase domain"/>
    <property type="match status" value="1"/>
</dbReference>
<dbReference type="InterPro" id="IPR018016">
    <property type="entry name" value="Nucleoside_phosphorylase_CS"/>
</dbReference>
<dbReference type="InterPro" id="IPR000845">
    <property type="entry name" value="Nucleoside_phosphorylase_d"/>
</dbReference>
<dbReference type="InterPro" id="IPR035994">
    <property type="entry name" value="Nucleoside_phosphorylase_sf"/>
</dbReference>
<dbReference type="PANTHER" id="PTHR43691">
    <property type="entry name" value="URIDINE PHOSPHORYLASE"/>
    <property type="match status" value="1"/>
</dbReference>
<dbReference type="PANTHER" id="PTHR43691:SF13">
    <property type="entry name" value="URIDINE PHOSPHORYLASE"/>
    <property type="match status" value="1"/>
</dbReference>
<dbReference type="Pfam" id="PF01048">
    <property type="entry name" value="PNP_UDP_1"/>
    <property type="match status" value="1"/>
</dbReference>
<dbReference type="SUPFAM" id="SSF53167">
    <property type="entry name" value="Purine and uridine phosphorylases"/>
    <property type="match status" value="1"/>
</dbReference>
<dbReference type="PROSITE" id="PS01232">
    <property type="entry name" value="PNP_UDP_1"/>
    <property type="match status" value="1"/>
</dbReference>
<accession>B9LS20</accession>
<sequence>MAKQPHLLVEEGDVHEIAIIPGDPGRVDRIADLCDDSELVAQNREYKIVNASYDGTDLTICSTGIGCPSAAIAVEELSRVGVETFLRCGTCGALQADMEVGDMVVATGAAKEEGTSKRYESVEYPAVPDYDALTELVGAAEDNDEEIHVGPIVSDDAFYNESDEYVDDWNDANLLAIEMEAATVFALARRKGLRAGAICTVDGNLVAGNQKGADSDDELPEKAKDNVERAIRITLNAVTAL</sequence>
<evidence type="ECO:0000269" key="1">
    <source>
    </source>
</evidence>
<evidence type="ECO:0000303" key="2">
    <source>
    </source>
</evidence>
<evidence type="ECO:0000305" key="3"/>
<evidence type="ECO:0000312" key="4">
    <source>
        <dbReference type="EMBL" id="ACM57894.1"/>
    </source>
</evidence>
<reference key="1">
    <citation type="journal article" date="2016" name="Stand. Genomic Sci.">
        <title>Complete genome sequence of the Antarctic Halorubrum lacusprofundi type strain ACAM 34.</title>
        <authorList>
            <person name="Anderson I.J."/>
            <person name="DasSarma P."/>
            <person name="Lucas S."/>
            <person name="Copeland A."/>
            <person name="Lapidus A."/>
            <person name="Del Rio T.G."/>
            <person name="Tice H."/>
            <person name="Dalin E."/>
            <person name="Bruce D.C."/>
            <person name="Goodwin L."/>
            <person name="Pitluck S."/>
            <person name="Sims D."/>
            <person name="Brettin T.S."/>
            <person name="Detter J.C."/>
            <person name="Han C.S."/>
            <person name="Larimer F."/>
            <person name="Hauser L."/>
            <person name="Land M."/>
            <person name="Ivanova N."/>
            <person name="Richardson P."/>
            <person name="Cavicchioli R."/>
            <person name="DasSarma S."/>
            <person name="Woese C.R."/>
            <person name="Kyrpides N.C."/>
        </authorList>
    </citation>
    <scope>NUCLEOTIDE SEQUENCE [LARGE SCALE GENOMIC DNA]</scope>
    <source>
        <strain>ATCC 49239 / DSM 5036 / JCM 8891 / ACAM 34</strain>
    </source>
</reference>
<reference key="2">
    <citation type="journal article" date="2022" name="Commun. Biol.">
        <title>A non-carboxylating pentose bisphosphate pathway in halophilic archaea.</title>
        <authorList>
            <person name="Sato T."/>
            <person name="Utashima S.H."/>
            <person name="Yoshii Y."/>
            <person name="Hirata K."/>
            <person name="Kanda S."/>
            <person name="Onoda Y."/>
            <person name="Jin J.Q."/>
            <person name="Xiao S."/>
            <person name="Minami R."/>
            <person name="Fukushima H."/>
            <person name="Noguchi A."/>
            <person name="Manabe Y."/>
            <person name="Fukase K."/>
            <person name="Atomi H."/>
        </authorList>
    </citation>
    <scope>FUNCTION</scope>
    <scope>CATALYTIC ACTIVITY</scope>
    <scope>ACTIVITY REGULATION</scope>
    <scope>BIOPHYSICOCHEMICAL PROPERTIES</scope>
</reference>
<comment type="function">
    <text evidence="1">Phosphorylase involved in the non-carboxylating pentose bisphosphate pathway, a nucleoside degradation pathway present in some halophilic archaea (PubMed:36434094). Catalyzes the phosphorolytic cleavage of guanosine to guanine and ribose-1-phosphate (R1P) (PubMed:36434094). Exhibits the highest activity toward guanosine, but also shows lower activity against inosine and adenosine (PubMed:36434094).</text>
</comment>
<comment type="catalytic activity">
    <reaction evidence="1">
        <text>guanosine + phosphate = alpha-D-ribose 1-phosphate + guanine</text>
        <dbReference type="Rhea" id="RHEA:13233"/>
        <dbReference type="ChEBI" id="CHEBI:16235"/>
        <dbReference type="ChEBI" id="CHEBI:16750"/>
        <dbReference type="ChEBI" id="CHEBI:43474"/>
        <dbReference type="ChEBI" id="CHEBI:57720"/>
        <dbReference type="EC" id="2.4.2.1"/>
    </reaction>
    <physiologicalReaction direction="left-to-right" evidence="1">
        <dbReference type="Rhea" id="RHEA:13234"/>
    </physiologicalReaction>
</comment>
<comment type="catalytic activity">
    <reaction evidence="1">
        <text>a purine D-ribonucleoside + phosphate = a purine nucleobase + alpha-D-ribose 1-phosphate</text>
        <dbReference type="Rhea" id="RHEA:19805"/>
        <dbReference type="ChEBI" id="CHEBI:26386"/>
        <dbReference type="ChEBI" id="CHEBI:43474"/>
        <dbReference type="ChEBI" id="CHEBI:57720"/>
        <dbReference type="ChEBI" id="CHEBI:142355"/>
        <dbReference type="EC" id="2.4.2.1"/>
    </reaction>
</comment>
<comment type="catalytic activity">
    <reaction evidence="1">
        <text>inosine + phosphate = alpha-D-ribose 1-phosphate + hypoxanthine</text>
        <dbReference type="Rhea" id="RHEA:27646"/>
        <dbReference type="ChEBI" id="CHEBI:17368"/>
        <dbReference type="ChEBI" id="CHEBI:17596"/>
        <dbReference type="ChEBI" id="CHEBI:43474"/>
        <dbReference type="ChEBI" id="CHEBI:57720"/>
        <dbReference type="EC" id="2.4.2.1"/>
    </reaction>
</comment>
<comment type="catalytic activity">
    <reaction evidence="1">
        <text>adenosine + phosphate = alpha-D-ribose 1-phosphate + adenine</text>
        <dbReference type="Rhea" id="RHEA:27642"/>
        <dbReference type="ChEBI" id="CHEBI:16335"/>
        <dbReference type="ChEBI" id="CHEBI:16708"/>
        <dbReference type="ChEBI" id="CHEBI:43474"/>
        <dbReference type="ChEBI" id="CHEBI:57720"/>
        <dbReference type="EC" id="2.4.2.1"/>
    </reaction>
</comment>
<comment type="activity regulation">
    <text evidence="1">Activity is higher at low KCl concentrations.</text>
</comment>
<comment type="biophysicochemical properties">
    <kinetics>
        <KM evidence="1">56 uM for guanosine</KM>
        <KM evidence="1">4.8 mM for phosphate</KM>
        <Vmax evidence="1">1.5 umol/min/mg enzyme toward guanosine</Vmax>
        <Vmax evidence="1">2.1 umol/min/mg enzyme toward phosphate</Vmax>
    </kinetics>
    <phDependence>
        <text evidence="1">Optimum pH is 7.5.</text>
    </phDependence>
    <temperatureDependence>
        <text evidence="1">Optimum temperature is 30 degrees Celsius.</text>
    </temperatureDependence>
</comment>
<comment type="similarity">
    <text evidence="3">Belongs to the PNP/UDP phosphorylase family.</text>
</comment>
<protein>
    <recommendedName>
        <fullName evidence="2">Guanosine phosphorylase</fullName>
        <ecNumber evidence="1">2.4.2.1</ecNumber>
    </recommendedName>
</protein>
<keyword id="KW-0328">Glycosyltransferase</keyword>
<keyword id="KW-1185">Reference proteome</keyword>
<keyword id="KW-0808">Transferase</keyword>
<feature type="chain" id="PRO_0000459712" description="Guanosine phosphorylase">
    <location>
        <begin position="1"/>
        <end position="241"/>
    </location>
</feature>
<proteinExistence type="evidence at protein level"/>